<protein>
    <recommendedName>
        <fullName evidence="5">Ketoisovalerate reductase BEA2</fullName>
        <shortName evidence="5">KIVR</shortName>
        <ecNumber evidence="2">1.2.7.-</ecNumber>
    </recommendedName>
    <alternativeName>
        <fullName evidence="5">Beauvericin biosynthesis cluster protein 2</fullName>
    </alternativeName>
</protein>
<name>BEA2_GIBF5</name>
<gene>
    <name evidence="5" type="primary">BEA2</name>
    <name type="ORF">FFUJ_09295</name>
</gene>
<accession>S0EGG0</accession>
<dbReference type="EC" id="1.2.7.-" evidence="2"/>
<dbReference type="EMBL" id="HF679031">
    <property type="protein sequence ID" value="CCT73879.1"/>
    <property type="molecule type" value="Genomic_DNA"/>
</dbReference>
<dbReference type="SMR" id="S0EGG0"/>
<dbReference type="STRING" id="1279085.S0EGG0"/>
<dbReference type="EnsemblFungi" id="CCT73879">
    <property type="protein sequence ID" value="CCT73879"/>
    <property type="gene ID" value="FFUJ_09295"/>
</dbReference>
<dbReference type="VEuPathDB" id="FungiDB:FFUJ_09295"/>
<dbReference type="HOGENOM" id="CLU_031468_9_0_1"/>
<dbReference type="Proteomes" id="UP000016800">
    <property type="component" value="Chromosome 9"/>
</dbReference>
<dbReference type="GO" id="GO:0005739">
    <property type="term" value="C:mitochondrion"/>
    <property type="evidence" value="ECO:0007669"/>
    <property type="project" value="TreeGrafter"/>
</dbReference>
<dbReference type="GO" id="GO:0008677">
    <property type="term" value="F:2-dehydropantoate 2-reductase activity"/>
    <property type="evidence" value="ECO:0007669"/>
    <property type="project" value="TreeGrafter"/>
</dbReference>
<dbReference type="GO" id="GO:0050661">
    <property type="term" value="F:NADP binding"/>
    <property type="evidence" value="ECO:0007669"/>
    <property type="project" value="TreeGrafter"/>
</dbReference>
<dbReference type="Gene3D" id="1.10.1040.10">
    <property type="entry name" value="N-(1-d-carboxylethyl)-l-norvaline Dehydrogenase, domain 2"/>
    <property type="match status" value="1"/>
</dbReference>
<dbReference type="Gene3D" id="3.40.50.720">
    <property type="entry name" value="NAD(P)-binding Rossmann-like Domain"/>
    <property type="match status" value="1"/>
</dbReference>
<dbReference type="InterPro" id="IPR008927">
    <property type="entry name" value="6-PGluconate_DH-like_C_sf"/>
</dbReference>
<dbReference type="InterPro" id="IPR013328">
    <property type="entry name" value="6PGD_dom2"/>
</dbReference>
<dbReference type="InterPro" id="IPR050838">
    <property type="entry name" value="Ketopantoate_reductase"/>
</dbReference>
<dbReference type="InterPro" id="IPR013752">
    <property type="entry name" value="KPA_reductase"/>
</dbReference>
<dbReference type="InterPro" id="IPR013332">
    <property type="entry name" value="KPR_N"/>
</dbReference>
<dbReference type="PANTHER" id="PTHR43765:SF2">
    <property type="entry name" value="2-DEHYDROPANTOATE 2-REDUCTASE"/>
    <property type="match status" value="1"/>
</dbReference>
<dbReference type="PANTHER" id="PTHR43765">
    <property type="entry name" value="2-DEHYDROPANTOATE 2-REDUCTASE-RELATED"/>
    <property type="match status" value="1"/>
</dbReference>
<dbReference type="Pfam" id="PF02558">
    <property type="entry name" value="ApbA"/>
    <property type="match status" value="1"/>
</dbReference>
<dbReference type="Pfam" id="PF08546">
    <property type="entry name" value="ApbA_C"/>
    <property type="match status" value="1"/>
</dbReference>
<dbReference type="SUPFAM" id="SSF48179">
    <property type="entry name" value="6-phosphogluconate dehydrogenase C-terminal domain-like"/>
    <property type="match status" value="1"/>
</dbReference>
<sequence>MASQEHPNWLTALLADTRPPPKLFAWSPANIQPKLDEGIDMGSSNSDEEYDNDACVCPSTDSDQRIYIIGPGNIGRLYATHMARHPNALPITLVVHRKELLSQWAACEGVGLADLTSGKIFLNKRFTVEWWTETRPPYGPVKEVADGKKLHNVFISTKAEAGLSEADRIRRYLGRCSSVVFAQNGVCKLWPPHGPLYISHRYPSGDTPTFSACVVSHGVASAGPFLSVHAAPADAYIGPVFWASDPESPWRQPSDDFFIRHIATTPLVNTKQVSSGEIWLLQLEKLVMNAAINPLTALLRYKTGELFTSYGSDDPLARVIDKLLWQTSAVIQGLIDHETSHSVITSYAEQMSQPGTSCSVPKVRKKLTERFSQPILKAKLYAFGLKIFEHRSSMLQDIEAGRKTEIRDFNGWIVDTACFLGTGLDVSVHSGLTGLIERCERFDKMELGRALL</sequence>
<organism>
    <name type="scientific">Gibberella fujikuroi (strain CBS 195.34 / IMI 58289 / NRRL A-6831)</name>
    <name type="common">Bakanae and foot rot disease fungus</name>
    <name type="synonym">Fusarium fujikuroi</name>
    <dbReference type="NCBI Taxonomy" id="1279085"/>
    <lineage>
        <taxon>Eukaryota</taxon>
        <taxon>Fungi</taxon>
        <taxon>Dikarya</taxon>
        <taxon>Ascomycota</taxon>
        <taxon>Pezizomycotina</taxon>
        <taxon>Sordariomycetes</taxon>
        <taxon>Hypocreomycetidae</taxon>
        <taxon>Hypocreales</taxon>
        <taxon>Nectriaceae</taxon>
        <taxon>Fusarium</taxon>
        <taxon>Fusarium fujikuroi species complex</taxon>
    </lineage>
</organism>
<keyword id="KW-0521">NADP</keyword>
<keyword id="KW-0560">Oxidoreductase</keyword>
<keyword id="KW-1185">Reference proteome</keyword>
<comment type="function">
    <text evidence="1 2 4">Ketoisovalerate reductase; part of the gene cluster that mediates the biosynthesis of beauvericin (BEA), a non-ribosomal cyclic hexadepsipeptide that shows antibiotic, antifungal, insecticidal, and cancer cell antiproliferative and antihaptotactic activity (PubMed:27750383). Ketoisovalerate reductase BEA2 catalyzes the NADPH-specific reduction of ketoisovaleric acid to hydroxyisovalerate, a precursor for beauvericin biosynthesis (By similarity). The nonribosomal cyclodepsipeptide synthetase BEA1 then catalyzes the formation of beauvericin via condensation and cyclization of 3 dipeptidol monomers, each composed of one unit of hydroxyisovalerate and one unit of N-methyl-phenylalanine (By similarity).</text>
</comment>
<comment type="catalytic activity">
    <reaction evidence="2">
        <text>(R)-2-hydroxy-3-methylbutanoate + NADP(+) = 3-methyl-2-oxobutanoate + NADPH + H(+)</text>
        <dbReference type="Rhea" id="RHEA:62268"/>
        <dbReference type="ChEBI" id="CHEBI:11851"/>
        <dbReference type="ChEBI" id="CHEBI:15378"/>
        <dbReference type="ChEBI" id="CHEBI:57783"/>
        <dbReference type="ChEBI" id="CHEBI:58349"/>
        <dbReference type="ChEBI" id="CHEBI:145660"/>
    </reaction>
</comment>
<comment type="induction">
    <text evidence="4">Expression is highly repressed by the histone deacetylase HDA1 and the beauvericin cluster-specific repressor BEA4 (PubMed:27750383). BEA biosynthesis is also repressed by the activity of the H3K27 methyltransferase KMT6 (PubMed:27750383).</text>
</comment>
<comment type="disruption phenotype">
    <text evidence="4">Decreases the production of beauvericin (PubMed:27750383).</text>
</comment>
<comment type="similarity">
    <text evidence="6">Belongs to the ketopantoate reductase family.</text>
</comment>
<evidence type="ECO:0000250" key="1">
    <source>
        <dbReference type="UniProtKB" id="B6D9A8"/>
    </source>
</evidence>
<evidence type="ECO:0000250" key="2">
    <source>
        <dbReference type="UniProtKB" id="G3GBU6"/>
    </source>
</evidence>
<evidence type="ECO:0000250" key="3">
    <source>
        <dbReference type="UniProtKB" id="P0A9J4"/>
    </source>
</evidence>
<evidence type="ECO:0000269" key="4">
    <source>
    </source>
</evidence>
<evidence type="ECO:0000303" key="5">
    <source>
    </source>
</evidence>
<evidence type="ECO:0000305" key="6"/>
<proteinExistence type="evidence at transcript level"/>
<feature type="chain" id="PRO_0000442151" description="Ketoisovalerate reductase BEA2">
    <location>
        <begin position="1"/>
        <end position="452"/>
    </location>
</feature>
<feature type="active site" description="Proton donor" evidence="3">
    <location>
        <position position="285"/>
    </location>
</feature>
<feature type="binding site" evidence="3">
    <location>
        <begin position="70"/>
        <end position="75"/>
    </location>
    <ligand>
        <name>NADP(+)</name>
        <dbReference type="ChEBI" id="CHEBI:58349"/>
    </ligand>
</feature>
<feature type="binding site" evidence="3">
    <location>
        <position position="289"/>
    </location>
    <ligand>
        <name>substrate</name>
    </ligand>
</feature>
<feature type="binding site" evidence="3">
    <location>
        <position position="293"/>
    </location>
    <ligand>
        <name>substrate</name>
    </ligand>
</feature>
<feature type="binding site" evidence="3">
    <location>
        <position position="393"/>
    </location>
    <ligand>
        <name>substrate</name>
    </ligand>
</feature>
<feature type="binding site" evidence="3">
    <location>
        <position position="405"/>
    </location>
    <ligand>
        <name>NADP(+)</name>
        <dbReference type="ChEBI" id="CHEBI:58349"/>
    </ligand>
</feature>
<reference key="1">
    <citation type="journal article" date="2013" name="PLoS Pathog.">
        <title>Deciphering the cryptic genome: genome-wide analyses of the rice pathogen Fusarium fujikuroi reveal complex regulation of secondary metabolism and novel metabolites.</title>
        <authorList>
            <person name="Wiemann P."/>
            <person name="Sieber C.M.K."/>
            <person name="von Bargen K.W."/>
            <person name="Studt L."/>
            <person name="Niehaus E.-M."/>
            <person name="Espino J.J."/>
            <person name="Huss K."/>
            <person name="Michielse C.B."/>
            <person name="Albermann S."/>
            <person name="Wagner D."/>
            <person name="Bergner S.V."/>
            <person name="Connolly L.R."/>
            <person name="Fischer A."/>
            <person name="Reuter G."/>
            <person name="Kleigrewe K."/>
            <person name="Bald T."/>
            <person name="Wingfield B.D."/>
            <person name="Ophir R."/>
            <person name="Freeman S."/>
            <person name="Hippler M."/>
            <person name="Smith K.M."/>
            <person name="Brown D.W."/>
            <person name="Proctor R.H."/>
            <person name="Muensterkoetter M."/>
            <person name="Freitag M."/>
            <person name="Humpf H.-U."/>
            <person name="Gueldener U."/>
            <person name="Tudzynski B."/>
        </authorList>
    </citation>
    <scope>NUCLEOTIDE SEQUENCE [LARGE SCALE GENOMIC DNA]</scope>
    <source>
        <strain>CBS 195.34 / IMI 58289 / NRRL A-6831</strain>
    </source>
</reference>
<reference key="2">
    <citation type="journal article" date="2016" name="Environ. Microbiol.">
        <title>Sound of silence: the beauvericin cluster in Fusarium fujikuroi is controlled by cluster-specific and global regulators mediated by H3K27 modification.</title>
        <authorList>
            <person name="Niehaus E.M."/>
            <person name="Studt L."/>
            <person name="von Bargen K.W."/>
            <person name="Kummer W."/>
            <person name="Humpf H.U."/>
            <person name="Reuter G."/>
            <person name="Tudzynski B."/>
        </authorList>
    </citation>
    <scope>FUNCTION</scope>
    <scope>INDUCTION</scope>
    <scope>DISRUPTION PHENOTYPE</scope>
</reference>